<evidence type="ECO:0000250" key="1"/>
<evidence type="ECO:0000255" key="2"/>
<evidence type="ECO:0000305" key="3"/>
<protein>
    <recommendedName>
        <fullName>Cell division protein ZapA</fullName>
    </recommendedName>
    <alternativeName>
        <fullName>Z ring-associated protein ZapA</fullName>
    </alternativeName>
</protein>
<keyword id="KW-0131">Cell cycle</keyword>
<keyword id="KW-0132">Cell division</keyword>
<keyword id="KW-0175">Coiled coil</keyword>
<keyword id="KW-0963">Cytoplasm</keyword>
<keyword id="KW-1185">Reference proteome</keyword>
<keyword id="KW-0717">Septation</keyword>
<sequence>MSSKSIELPVLGQVLRLNCPEEQHEALKQAARELDLRVSEMKERTGILQLERVLSIVALNLSYELLQAQQKTTSIEALLQHRIQQLDHSLESILTQKVNN</sequence>
<name>ZAPA_PASMU</name>
<reference key="1">
    <citation type="journal article" date="2001" name="Proc. Natl. Acad. Sci. U.S.A.">
        <title>Complete genomic sequence of Pasteurella multocida Pm70.</title>
        <authorList>
            <person name="May B.J."/>
            <person name="Zhang Q."/>
            <person name="Li L.L."/>
            <person name="Paustian M.L."/>
            <person name="Whittam T.S."/>
            <person name="Kapur V."/>
        </authorList>
    </citation>
    <scope>NUCLEOTIDE SEQUENCE [LARGE SCALE GENOMIC DNA]</scope>
    <source>
        <strain>Pm70</strain>
    </source>
</reference>
<dbReference type="EMBL" id="AE004439">
    <property type="protein sequence ID" value="AAK03806.1"/>
    <property type="molecule type" value="Genomic_DNA"/>
</dbReference>
<dbReference type="RefSeq" id="WP_005718731.1">
    <property type="nucleotide sequence ID" value="NC_002663.1"/>
</dbReference>
<dbReference type="SMR" id="Q9CKA3"/>
<dbReference type="STRING" id="272843.PM1722"/>
<dbReference type="EnsemblBacteria" id="AAK03806">
    <property type="protein sequence ID" value="AAK03806"/>
    <property type="gene ID" value="PM1722"/>
</dbReference>
<dbReference type="KEGG" id="pmu:PM1722"/>
<dbReference type="HOGENOM" id="CLU_116623_3_0_6"/>
<dbReference type="OrthoDB" id="5917174at2"/>
<dbReference type="Proteomes" id="UP000000809">
    <property type="component" value="Chromosome"/>
</dbReference>
<dbReference type="GO" id="GO:0032153">
    <property type="term" value="C:cell division site"/>
    <property type="evidence" value="ECO:0007669"/>
    <property type="project" value="TreeGrafter"/>
</dbReference>
<dbReference type="GO" id="GO:0030428">
    <property type="term" value="C:cell septum"/>
    <property type="evidence" value="ECO:0007669"/>
    <property type="project" value="TreeGrafter"/>
</dbReference>
<dbReference type="GO" id="GO:0005829">
    <property type="term" value="C:cytosol"/>
    <property type="evidence" value="ECO:0007669"/>
    <property type="project" value="TreeGrafter"/>
</dbReference>
<dbReference type="GO" id="GO:0000917">
    <property type="term" value="P:division septum assembly"/>
    <property type="evidence" value="ECO:0007669"/>
    <property type="project" value="UniProtKB-KW"/>
</dbReference>
<dbReference type="GO" id="GO:0043093">
    <property type="term" value="P:FtsZ-dependent cytokinesis"/>
    <property type="evidence" value="ECO:0007669"/>
    <property type="project" value="TreeGrafter"/>
</dbReference>
<dbReference type="GO" id="GO:0000921">
    <property type="term" value="P:septin ring assembly"/>
    <property type="evidence" value="ECO:0007669"/>
    <property type="project" value="TreeGrafter"/>
</dbReference>
<dbReference type="Gene3D" id="1.20.5.50">
    <property type="match status" value="1"/>
</dbReference>
<dbReference type="Gene3D" id="3.30.160.880">
    <property type="entry name" value="Cell division protein ZapA protomer, N-terminal domain"/>
    <property type="match status" value="1"/>
</dbReference>
<dbReference type="InterPro" id="IPR007838">
    <property type="entry name" value="Cell_div_ZapA-like"/>
</dbReference>
<dbReference type="InterPro" id="IPR036192">
    <property type="entry name" value="Cell_div_ZapA-like_sf"/>
</dbReference>
<dbReference type="InterPro" id="IPR042233">
    <property type="entry name" value="Cell_div_ZapA_N"/>
</dbReference>
<dbReference type="PANTHER" id="PTHR34981">
    <property type="entry name" value="CELL DIVISION PROTEIN ZAPA"/>
    <property type="match status" value="1"/>
</dbReference>
<dbReference type="PANTHER" id="PTHR34981:SF1">
    <property type="entry name" value="CELL DIVISION PROTEIN ZAPA"/>
    <property type="match status" value="1"/>
</dbReference>
<dbReference type="Pfam" id="PF05164">
    <property type="entry name" value="ZapA"/>
    <property type="match status" value="1"/>
</dbReference>
<dbReference type="SUPFAM" id="SSF102829">
    <property type="entry name" value="Cell division protein ZapA-like"/>
    <property type="match status" value="1"/>
</dbReference>
<comment type="function">
    <text evidence="1">Activator of cell division through the inhibition of FtsZ GTPase activity, therefore promoting FtsZ assembly into bundles of protofilaments necessary for the formation of the division Z ring. It is recruited early at mid-cell but it is not essential for cell division (By similarity).</text>
</comment>
<comment type="subunit">
    <text evidence="1">Homodimer. Interacts with FtsZ (By similarity).</text>
</comment>
<comment type="subcellular location">
    <subcellularLocation>
        <location evidence="1">Cytoplasm</location>
    </subcellularLocation>
    <text evidence="1">Localizes at mid-cell.</text>
</comment>
<comment type="similarity">
    <text evidence="3">Belongs to the ZapA family. Type 1 subfamily.</text>
</comment>
<proteinExistence type="inferred from homology"/>
<organism>
    <name type="scientific">Pasteurella multocida (strain Pm70)</name>
    <dbReference type="NCBI Taxonomy" id="272843"/>
    <lineage>
        <taxon>Bacteria</taxon>
        <taxon>Pseudomonadati</taxon>
        <taxon>Pseudomonadota</taxon>
        <taxon>Gammaproteobacteria</taxon>
        <taxon>Pasteurellales</taxon>
        <taxon>Pasteurellaceae</taxon>
        <taxon>Pasteurella</taxon>
    </lineage>
</organism>
<accession>Q9CKA3</accession>
<gene>
    <name type="primary">zapA</name>
    <name type="ordered locus">PM1722</name>
</gene>
<feature type="chain" id="PRO_0000346128" description="Cell division protein ZapA">
    <location>
        <begin position="1"/>
        <end position="100"/>
    </location>
</feature>
<feature type="coiled-coil region" evidence="2">
    <location>
        <begin position="21"/>
        <end position="45"/>
    </location>
</feature>